<evidence type="ECO:0000255" key="1">
    <source>
        <dbReference type="HAMAP-Rule" id="MF_00141"/>
    </source>
</evidence>
<accession>C1CPU3</accession>
<gene>
    <name evidence="1" type="primary">efp</name>
    <name type="ordered locus">SPT_0470</name>
</gene>
<dbReference type="EMBL" id="CP000921">
    <property type="protein sequence ID" value="ACO23442.1"/>
    <property type="molecule type" value="Genomic_DNA"/>
</dbReference>
<dbReference type="RefSeq" id="WP_000568640.1">
    <property type="nucleotide sequence ID" value="NC_012469.1"/>
</dbReference>
<dbReference type="SMR" id="C1CPU3"/>
<dbReference type="GeneID" id="49599200"/>
<dbReference type="KEGG" id="snt:SPT_0470"/>
<dbReference type="HOGENOM" id="CLU_074944_3_0_9"/>
<dbReference type="UniPathway" id="UPA00345"/>
<dbReference type="GO" id="GO:0005737">
    <property type="term" value="C:cytoplasm"/>
    <property type="evidence" value="ECO:0007669"/>
    <property type="project" value="UniProtKB-SubCell"/>
</dbReference>
<dbReference type="GO" id="GO:0003746">
    <property type="term" value="F:translation elongation factor activity"/>
    <property type="evidence" value="ECO:0007669"/>
    <property type="project" value="UniProtKB-UniRule"/>
</dbReference>
<dbReference type="GO" id="GO:0043043">
    <property type="term" value="P:peptide biosynthetic process"/>
    <property type="evidence" value="ECO:0007669"/>
    <property type="project" value="InterPro"/>
</dbReference>
<dbReference type="CDD" id="cd04470">
    <property type="entry name" value="S1_EF-P_repeat_1"/>
    <property type="match status" value="1"/>
</dbReference>
<dbReference type="CDD" id="cd05794">
    <property type="entry name" value="S1_EF-P_repeat_2"/>
    <property type="match status" value="1"/>
</dbReference>
<dbReference type="FunFam" id="2.30.30.30:FF:000003">
    <property type="entry name" value="Elongation factor P"/>
    <property type="match status" value="1"/>
</dbReference>
<dbReference type="FunFam" id="2.40.50.140:FF:000004">
    <property type="entry name" value="Elongation factor P"/>
    <property type="match status" value="1"/>
</dbReference>
<dbReference type="FunFam" id="2.40.50.140:FF:000009">
    <property type="entry name" value="Elongation factor P"/>
    <property type="match status" value="1"/>
</dbReference>
<dbReference type="Gene3D" id="2.30.30.30">
    <property type="match status" value="1"/>
</dbReference>
<dbReference type="Gene3D" id="2.40.50.140">
    <property type="entry name" value="Nucleic acid-binding proteins"/>
    <property type="match status" value="2"/>
</dbReference>
<dbReference type="HAMAP" id="MF_00141">
    <property type="entry name" value="EF_P"/>
    <property type="match status" value="1"/>
</dbReference>
<dbReference type="InterPro" id="IPR015365">
    <property type="entry name" value="Elong-fact-P_C"/>
</dbReference>
<dbReference type="InterPro" id="IPR012340">
    <property type="entry name" value="NA-bd_OB-fold"/>
</dbReference>
<dbReference type="InterPro" id="IPR014722">
    <property type="entry name" value="Rib_uL2_dom2"/>
</dbReference>
<dbReference type="InterPro" id="IPR020599">
    <property type="entry name" value="Transl_elong_fac_P/YeiP"/>
</dbReference>
<dbReference type="InterPro" id="IPR013185">
    <property type="entry name" value="Transl_elong_KOW-like"/>
</dbReference>
<dbReference type="InterPro" id="IPR001059">
    <property type="entry name" value="Transl_elong_P/YeiP_cen"/>
</dbReference>
<dbReference type="InterPro" id="IPR013852">
    <property type="entry name" value="Transl_elong_P/YeiP_CS"/>
</dbReference>
<dbReference type="InterPro" id="IPR011768">
    <property type="entry name" value="Transl_elongation_fac_P"/>
</dbReference>
<dbReference type="InterPro" id="IPR008991">
    <property type="entry name" value="Translation_prot_SH3-like_sf"/>
</dbReference>
<dbReference type="NCBIfam" id="TIGR00038">
    <property type="entry name" value="efp"/>
    <property type="match status" value="1"/>
</dbReference>
<dbReference type="NCBIfam" id="NF001810">
    <property type="entry name" value="PRK00529.1"/>
    <property type="match status" value="1"/>
</dbReference>
<dbReference type="PANTHER" id="PTHR30053">
    <property type="entry name" value="ELONGATION FACTOR P"/>
    <property type="match status" value="1"/>
</dbReference>
<dbReference type="PANTHER" id="PTHR30053:SF12">
    <property type="entry name" value="ELONGATION FACTOR P (EF-P) FAMILY PROTEIN"/>
    <property type="match status" value="1"/>
</dbReference>
<dbReference type="Pfam" id="PF01132">
    <property type="entry name" value="EFP"/>
    <property type="match status" value="1"/>
</dbReference>
<dbReference type="Pfam" id="PF08207">
    <property type="entry name" value="EFP_N"/>
    <property type="match status" value="1"/>
</dbReference>
<dbReference type="Pfam" id="PF09285">
    <property type="entry name" value="Elong-fact-P_C"/>
    <property type="match status" value="1"/>
</dbReference>
<dbReference type="PIRSF" id="PIRSF005901">
    <property type="entry name" value="EF-P"/>
    <property type="match status" value="1"/>
</dbReference>
<dbReference type="SMART" id="SM01185">
    <property type="entry name" value="EFP"/>
    <property type="match status" value="1"/>
</dbReference>
<dbReference type="SMART" id="SM00841">
    <property type="entry name" value="Elong-fact-P_C"/>
    <property type="match status" value="1"/>
</dbReference>
<dbReference type="SUPFAM" id="SSF50249">
    <property type="entry name" value="Nucleic acid-binding proteins"/>
    <property type="match status" value="2"/>
</dbReference>
<dbReference type="SUPFAM" id="SSF50104">
    <property type="entry name" value="Translation proteins SH3-like domain"/>
    <property type="match status" value="1"/>
</dbReference>
<dbReference type="PROSITE" id="PS01275">
    <property type="entry name" value="EFP"/>
    <property type="match status" value="1"/>
</dbReference>
<keyword id="KW-0963">Cytoplasm</keyword>
<keyword id="KW-0251">Elongation factor</keyword>
<keyword id="KW-0648">Protein biosynthesis</keyword>
<sequence length="186" mass="20600">MIEASKLKAGMTFETADGKLIRVLEASHHKPGKGNTIMRMKLRDVRTGSTFDTSYRPEEKFEQAIIETVPAQYLYKMDDTAYFMNTETYDQYEIPVVNVENELLYILENSDVKIQFYGTEVIGVTVPTTVELTVAETQPSIKGATVTGSGKPATMETGLVVNVPDFIEAGQKLVINTAEGTYVSRA</sequence>
<feature type="chain" id="PRO_1000123034" description="Elongation factor P">
    <location>
        <begin position="1"/>
        <end position="186"/>
    </location>
</feature>
<comment type="function">
    <text evidence="1">Involved in peptide bond synthesis. Stimulates efficient translation and peptide-bond synthesis on native or reconstituted 70S ribosomes in vitro. Probably functions indirectly by altering the affinity of the ribosome for aminoacyl-tRNA, thus increasing their reactivity as acceptors for peptidyl transferase.</text>
</comment>
<comment type="pathway">
    <text evidence="1">Protein biosynthesis; polypeptide chain elongation.</text>
</comment>
<comment type="subcellular location">
    <subcellularLocation>
        <location evidence="1">Cytoplasm</location>
    </subcellularLocation>
</comment>
<comment type="similarity">
    <text evidence="1">Belongs to the elongation factor P family.</text>
</comment>
<reference key="1">
    <citation type="journal article" date="2010" name="Genome Biol.">
        <title>Structure and dynamics of the pan-genome of Streptococcus pneumoniae and closely related species.</title>
        <authorList>
            <person name="Donati C."/>
            <person name="Hiller N.L."/>
            <person name="Tettelin H."/>
            <person name="Muzzi A."/>
            <person name="Croucher N.J."/>
            <person name="Angiuoli S.V."/>
            <person name="Oggioni M."/>
            <person name="Dunning Hotopp J.C."/>
            <person name="Hu F.Z."/>
            <person name="Riley D.R."/>
            <person name="Covacci A."/>
            <person name="Mitchell T.J."/>
            <person name="Bentley S.D."/>
            <person name="Kilian M."/>
            <person name="Ehrlich G.D."/>
            <person name="Rappuoli R."/>
            <person name="Moxon E.R."/>
            <person name="Masignani V."/>
        </authorList>
    </citation>
    <scope>NUCLEOTIDE SEQUENCE [LARGE SCALE GENOMIC DNA]</scope>
    <source>
        <strain>Taiwan19F-14</strain>
    </source>
</reference>
<proteinExistence type="inferred from homology"/>
<protein>
    <recommendedName>
        <fullName evidence="1">Elongation factor P</fullName>
        <shortName evidence="1">EF-P</shortName>
    </recommendedName>
</protein>
<organism>
    <name type="scientific">Streptococcus pneumoniae (strain Taiwan19F-14)</name>
    <dbReference type="NCBI Taxonomy" id="487213"/>
    <lineage>
        <taxon>Bacteria</taxon>
        <taxon>Bacillati</taxon>
        <taxon>Bacillota</taxon>
        <taxon>Bacilli</taxon>
        <taxon>Lactobacillales</taxon>
        <taxon>Streptococcaceae</taxon>
        <taxon>Streptococcus</taxon>
    </lineage>
</organism>
<name>EFP_STRZT</name>